<proteinExistence type="evidence at transcript level"/>
<accession>P14325</accession>
<accession>Q54HF7</accession>
<organism>
    <name type="scientific">Dictyostelium discoideum</name>
    <name type="common">Social amoeba</name>
    <dbReference type="NCBI Taxonomy" id="44689"/>
    <lineage>
        <taxon>Eukaryota</taxon>
        <taxon>Amoebozoa</taxon>
        <taxon>Evosea</taxon>
        <taxon>Eumycetozoa</taxon>
        <taxon>Dictyostelia</taxon>
        <taxon>Dictyosteliales</taxon>
        <taxon>Dictyosteliaceae</taxon>
        <taxon>Dictyostelium</taxon>
    </lineage>
</organism>
<evidence type="ECO:0000250" key="1">
    <source>
        <dbReference type="UniProtKB" id="P00962"/>
    </source>
</evidence>
<evidence type="ECO:0000250" key="2">
    <source>
        <dbReference type="UniProtKB" id="P47897"/>
    </source>
</evidence>
<evidence type="ECO:0000305" key="3"/>
<feature type="chain" id="PRO_0000195862" description="Probable glutamine--tRNA ligase">
    <location>
        <begin position="1"/>
        <end position="779"/>
    </location>
</feature>
<feature type="binding site" evidence="1">
    <location>
        <begin position="268"/>
        <end position="270"/>
    </location>
    <ligand>
        <name>ATP</name>
        <dbReference type="ChEBI" id="CHEBI:30616"/>
    </ligand>
</feature>
<feature type="binding site" evidence="1">
    <location>
        <begin position="274"/>
        <end position="280"/>
    </location>
    <ligand>
        <name>ATP</name>
        <dbReference type="ChEBI" id="CHEBI:30616"/>
    </ligand>
</feature>
<feature type="binding site" evidence="1">
    <location>
        <position position="300"/>
    </location>
    <ligand>
        <name>L-glutamine</name>
        <dbReference type="ChEBI" id="CHEBI:58359"/>
    </ligand>
</feature>
<feature type="binding site" evidence="1">
    <location>
        <position position="440"/>
    </location>
    <ligand>
        <name>L-glutamine</name>
        <dbReference type="ChEBI" id="CHEBI:58359"/>
    </ligand>
</feature>
<feature type="binding site" evidence="1">
    <location>
        <position position="459"/>
    </location>
    <ligand>
        <name>ATP</name>
        <dbReference type="ChEBI" id="CHEBI:30616"/>
    </ligand>
</feature>
<feature type="binding site" evidence="1">
    <location>
        <begin position="488"/>
        <end position="489"/>
    </location>
    <ligand>
        <name>ATP</name>
        <dbReference type="ChEBI" id="CHEBI:30616"/>
    </ligand>
</feature>
<feature type="binding site" evidence="1">
    <location>
        <begin position="496"/>
        <end position="498"/>
    </location>
    <ligand>
        <name>ATP</name>
        <dbReference type="ChEBI" id="CHEBI:30616"/>
    </ligand>
</feature>
<feature type="sequence conflict" description="In Ref. 2; CAA33446." evidence="3" ref="2">
    <original>L</original>
    <variation>F</variation>
    <location>
        <position position="219"/>
    </location>
</feature>
<sequence length="779" mass="88426">MSTKPTINKDELVTLFSQIGLDSSKAKETTNNATLSSNLQEIIKEAGAESGCEKSVGLLLYTLATKYPANAMKHRATLVDYIANKKSVNSINLQACLDYLRRTANEELNVAEFEQSCGVGVVITREQVAQAVSDYINKNKSDLLEKRYQFNIGGILMEIKNSLKWANAKDIKEEVDAAILSLLGPKTDADKAPPAKPVKPTTPTAVATTTAATTTTGDLSPIIPAELKPAKEEIKFPDPSDNIQNTPKLLADHLKTTGGKIVTRFPPEPNGYLHIGHAKAMHLNFGYAKKNGGKCYLRFDDTNPEKENQEYIDSIIDSVKWLGHEPCEITYSSSQFDTLYEMANELIRRGYAYVCHQTASEISEGREKMTDSPYRNRTVEENLKLFEDMRLGKFEEGKAILRMKGDMKHPNPCMRDLIAYRIKYHHHPMSGDKWCIYPSYDYTHCLVDSIENITHSLCTLEFEIRRLTYNWLIDVLGLYRPVVWEYARLNLTHTVLSKRKIITLVQNKIVNGWDDPRLSTLNAFRRKGYTPEAINLLCDTIGVTRTNGTTISYELLELCCRQDLDGKATRAMAVFDPIKVVITNYPEDKSEEINAPNIPSKPEKGTHKIDFSRIVYIERSDFRMEDNKDFFGLAPGKEILLKYAYNIKCEKVIQDADGKVTELHVTYDKDNSSKKLKTIHWVSSVAGTEPMKAEVRLYEHLFKDSEIGDDWLNNINPNSLRIIPNAFIDKTVLASKEYDRYQFERVGYFVVDKDTTSDKMVFNRTVSLKENKEKSKSRN</sequence>
<gene>
    <name type="primary">glnS</name>
    <name type="synonym">cinA</name>
    <name type="synonym">H4</name>
    <name type="ORF">DDB_G0289481</name>
</gene>
<dbReference type="EC" id="6.1.1.18" evidence="2"/>
<dbReference type="EMBL" id="AAFI02000141">
    <property type="protein sequence ID" value="EAL62672.1"/>
    <property type="molecule type" value="Genomic_DNA"/>
</dbReference>
<dbReference type="EMBL" id="X15388">
    <property type="protein sequence ID" value="CAA33446.1"/>
    <property type="status" value="ALT_FRAME"/>
    <property type="molecule type" value="Genomic_DNA"/>
</dbReference>
<dbReference type="PIR" id="S07563">
    <property type="entry name" value="S07563"/>
</dbReference>
<dbReference type="RefSeq" id="XP_636180.1">
    <property type="nucleotide sequence ID" value="XM_631088.1"/>
</dbReference>
<dbReference type="SMR" id="P14325"/>
<dbReference type="FunCoup" id="P14325">
    <property type="interactions" value="1198"/>
</dbReference>
<dbReference type="STRING" id="44689.P14325"/>
<dbReference type="PaxDb" id="44689-DDB0201644"/>
<dbReference type="EnsemblProtists" id="EAL62672">
    <property type="protein sequence ID" value="EAL62672"/>
    <property type="gene ID" value="DDB_G0289481"/>
</dbReference>
<dbReference type="GeneID" id="8627167"/>
<dbReference type="KEGG" id="ddi:DDB_G0289481"/>
<dbReference type="dictyBase" id="DDB_G0289481">
    <property type="gene designation" value="glnS"/>
</dbReference>
<dbReference type="VEuPathDB" id="AmoebaDB:DDB_G0289481"/>
<dbReference type="eggNOG" id="KOG1148">
    <property type="taxonomic scope" value="Eukaryota"/>
</dbReference>
<dbReference type="HOGENOM" id="CLU_001882_2_3_1"/>
<dbReference type="InParanoid" id="P14325"/>
<dbReference type="OMA" id="FAWRIMG"/>
<dbReference type="PhylomeDB" id="P14325"/>
<dbReference type="Reactome" id="R-DDI-9856649">
    <property type="pathway name" value="Transcriptional and post-translational regulation of MITF-M expression and activity"/>
</dbReference>
<dbReference type="PRO" id="PR:P14325"/>
<dbReference type="Proteomes" id="UP000002195">
    <property type="component" value="Chromosome 5"/>
</dbReference>
<dbReference type="GO" id="GO:0005737">
    <property type="term" value="C:cytoplasm"/>
    <property type="evidence" value="ECO:0000250"/>
    <property type="project" value="dictyBase"/>
</dbReference>
<dbReference type="GO" id="GO:0005829">
    <property type="term" value="C:cytosol"/>
    <property type="evidence" value="ECO:0000318"/>
    <property type="project" value="GO_Central"/>
</dbReference>
<dbReference type="GO" id="GO:0005524">
    <property type="term" value="F:ATP binding"/>
    <property type="evidence" value="ECO:0007669"/>
    <property type="project" value="UniProtKB-KW"/>
</dbReference>
<dbReference type="GO" id="GO:0004819">
    <property type="term" value="F:glutamine-tRNA ligase activity"/>
    <property type="evidence" value="ECO:0000250"/>
    <property type="project" value="dictyBase"/>
</dbReference>
<dbReference type="GO" id="GO:0006425">
    <property type="term" value="P:glutaminyl-tRNA aminoacylation"/>
    <property type="evidence" value="ECO:0000250"/>
    <property type="project" value="dictyBase"/>
</dbReference>
<dbReference type="FunFam" id="2.40.240.10:FF:000007">
    <property type="entry name" value="Glutamine--tRNA ligase"/>
    <property type="match status" value="1"/>
</dbReference>
<dbReference type="FunFam" id="1.10.10.2420:FF:000001">
    <property type="entry name" value="Glutamine--tRNA ligase cytoplasmic"/>
    <property type="match status" value="1"/>
</dbReference>
<dbReference type="FunFam" id="1.10.8.1290:FF:000002">
    <property type="entry name" value="Glutamine--tRNA ligase cytoplasmic"/>
    <property type="match status" value="1"/>
</dbReference>
<dbReference type="FunFam" id="2.40.240.10:FF:000011">
    <property type="entry name" value="Glutamine--tRNA ligase cytoplasmic"/>
    <property type="match status" value="1"/>
</dbReference>
<dbReference type="FunFam" id="3.40.50.620:FF:000037">
    <property type="entry name" value="Glutamine--tRNA ligase cytoplasmic"/>
    <property type="match status" value="1"/>
</dbReference>
<dbReference type="Gene3D" id="1.10.10.2420">
    <property type="match status" value="1"/>
</dbReference>
<dbReference type="Gene3D" id="1.10.8.1290">
    <property type="entry name" value="Glutaminyl-tRNA synthetase, non-specific RNA binding region part 1, domain 1"/>
    <property type="match status" value="1"/>
</dbReference>
<dbReference type="Gene3D" id="3.40.50.620">
    <property type="entry name" value="HUPs"/>
    <property type="match status" value="1"/>
</dbReference>
<dbReference type="Gene3D" id="2.40.240.10">
    <property type="entry name" value="Ribosomal Protein L25, Chain P"/>
    <property type="match status" value="2"/>
</dbReference>
<dbReference type="InterPro" id="IPR001412">
    <property type="entry name" value="aa-tRNA-synth_I_CS"/>
</dbReference>
<dbReference type="InterPro" id="IPR004514">
    <property type="entry name" value="Gln-tRNA-synth"/>
</dbReference>
<dbReference type="InterPro" id="IPR007638">
    <property type="entry name" value="Gln-tRNA-synth_Ib_RNA-bd_2"/>
</dbReference>
<dbReference type="InterPro" id="IPR007639">
    <property type="entry name" value="Gln-tRNA-synth_Ib_RNA-bd_N"/>
</dbReference>
<dbReference type="InterPro" id="IPR042558">
    <property type="entry name" value="Gln-tRNA-synth_Ib_RNA-bd_N_1"/>
</dbReference>
<dbReference type="InterPro" id="IPR042559">
    <property type="entry name" value="Gln-tRNA-synth_Ib_RNA-bd_N_2"/>
</dbReference>
<dbReference type="InterPro" id="IPR050132">
    <property type="entry name" value="Gln/Glu-tRNA_Ligase"/>
</dbReference>
<dbReference type="InterPro" id="IPR000924">
    <property type="entry name" value="Glu/Gln-tRNA-synth"/>
</dbReference>
<dbReference type="InterPro" id="IPR020058">
    <property type="entry name" value="Glu/Gln-tRNA-synth_Ib_cat-dom"/>
</dbReference>
<dbReference type="InterPro" id="IPR020059">
    <property type="entry name" value="Glu/Gln-tRNA-synth_Ib_codon-bd"/>
</dbReference>
<dbReference type="InterPro" id="IPR020056">
    <property type="entry name" value="Rbsml_bL25/Gln-tRNA_synth_N"/>
</dbReference>
<dbReference type="InterPro" id="IPR011035">
    <property type="entry name" value="Ribosomal_bL25/Gln-tRNA_synth"/>
</dbReference>
<dbReference type="InterPro" id="IPR014729">
    <property type="entry name" value="Rossmann-like_a/b/a_fold"/>
</dbReference>
<dbReference type="InterPro" id="IPR049437">
    <property type="entry name" value="tRNA-synt_1c_C2"/>
</dbReference>
<dbReference type="NCBIfam" id="TIGR00440">
    <property type="entry name" value="glnS"/>
    <property type="match status" value="1"/>
</dbReference>
<dbReference type="PANTHER" id="PTHR43097:SF4">
    <property type="entry name" value="GLUTAMINE--TRNA LIGASE"/>
    <property type="match status" value="1"/>
</dbReference>
<dbReference type="PANTHER" id="PTHR43097">
    <property type="entry name" value="GLUTAMINE-TRNA LIGASE"/>
    <property type="match status" value="1"/>
</dbReference>
<dbReference type="Pfam" id="PF00749">
    <property type="entry name" value="tRNA-synt_1c"/>
    <property type="match status" value="1"/>
</dbReference>
<dbReference type="Pfam" id="PF03950">
    <property type="entry name" value="tRNA-synt_1c_C"/>
    <property type="match status" value="1"/>
</dbReference>
<dbReference type="Pfam" id="PF20974">
    <property type="entry name" value="tRNA-synt_1c_C2"/>
    <property type="match status" value="1"/>
</dbReference>
<dbReference type="Pfam" id="PF04558">
    <property type="entry name" value="tRNA_synt_1c_R1"/>
    <property type="match status" value="1"/>
</dbReference>
<dbReference type="Pfam" id="PF04557">
    <property type="entry name" value="tRNA_synt_1c_R2"/>
    <property type="match status" value="1"/>
</dbReference>
<dbReference type="PRINTS" id="PR00987">
    <property type="entry name" value="TRNASYNTHGLU"/>
</dbReference>
<dbReference type="SUPFAM" id="SSF52374">
    <property type="entry name" value="Nucleotidylyl transferase"/>
    <property type="match status" value="1"/>
</dbReference>
<dbReference type="SUPFAM" id="SSF50715">
    <property type="entry name" value="Ribosomal protein L25-like"/>
    <property type="match status" value="1"/>
</dbReference>
<dbReference type="PROSITE" id="PS00178">
    <property type="entry name" value="AA_TRNA_LIGASE_I"/>
    <property type="match status" value="1"/>
</dbReference>
<name>SYQ_DICDI</name>
<protein>
    <recommendedName>
        <fullName>Probable glutamine--tRNA ligase</fullName>
        <ecNumber evidence="2">6.1.1.18</ecNumber>
    </recommendedName>
    <alternativeName>
        <fullName>Glutaminyl-tRNA synthetase</fullName>
        <shortName>GlnRS</shortName>
    </alternativeName>
    <alternativeName>
        <fullName>Vegetative-specific protein H4</fullName>
    </alternativeName>
</protein>
<reference key="1">
    <citation type="journal article" date="2005" name="Nature">
        <title>The genome of the social amoeba Dictyostelium discoideum.</title>
        <authorList>
            <person name="Eichinger L."/>
            <person name="Pachebat J.A."/>
            <person name="Gloeckner G."/>
            <person name="Rajandream M.A."/>
            <person name="Sucgang R."/>
            <person name="Berriman M."/>
            <person name="Song J."/>
            <person name="Olsen R."/>
            <person name="Szafranski K."/>
            <person name="Xu Q."/>
            <person name="Tunggal B."/>
            <person name="Kummerfeld S."/>
            <person name="Madera M."/>
            <person name="Konfortov B.A."/>
            <person name="Rivero F."/>
            <person name="Bankier A.T."/>
            <person name="Lehmann R."/>
            <person name="Hamlin N."/>
            <person name="Davies R."/>
            <person name="Gaudet P."/>
            <person name="Fey P."/>
            <person name="Pilcher K."/>
            <person name="Chen G."/>
            <person name="Saunders D."/>
            <person name="Sodergren E.J."/>
            <person name="Davis P."/>
            <person name="Kerhornou A."/>
            <person name="Nie X."/>
            <person name="Hall N."/>
            <person name="Anjard C."/>
            <person name="Hemphill L."/>
            <person name="Bason N."/>
            <person name="Farbrother P."/>
            <person name="Desany B."/>
            <person name="Just E."/>
            <person name="Morio T."/>
            <person name="Rost R."/>
            <person name="Churcher C.M."/>
            <person name="Cooper J."/>
            <person name="Haydock S."/>
            <person name="van Driessche N."/>
            <person name="Cronin A."/>
            <person name="Goodhead I."/>
            <person name="Muzny D.M."/>
            <person name="Mourier T."/>
            <person name="Pain A."/>
            <person name="Lu M."/>
            <person name="Harper D."/>
            <person name="Lindsay R."/>
            <person name="Hauser H."/>
            <person name="James K.D."/>
            <person name="Quiles M."/>
            <person name="Madan Babu M."/>
            <person name="Saito T."/>
            <person name="Buchrieser C."/>
            <person name="Wardroper A."/>
            <person name="Felder M."/>
            <person name="Thangavelu M."/>
            <person name="Johnson D."/>
            <person name="Knights A."/>
            <person name="Loulseged H."/>
            <person name="Mungall K.L."/>
            <person name="Oliver K."/>
            <person name="Price C."/>
            <person name="Quail M.A."/>
            <person name="Urushihara H."/>
            <person name="Hernandez J."/>
            <person name="Rabbinowitsch E."/>
            <person name="Steffen D."/>
            <person name="Sanders M."/>
            <person name="Ma J."/>
            <person name="Kohara Y."/>
            <person name="Sharp S."/>
            <person name="Simmonds M.N."/>
            <person name="Spiegler S."/>
            <person name="Tivey A."/>
            <person name="Sugano S."/>
            <person name="White B."/>
            <person name="Walker D."/>
            <person name="Woodward J.R."/>
            <person name="Winckler T."/>
            <person name="Tanaka Y."/>
            <person name="Shaulsky G."/>
            <person name="Schleicher M."/>
            <person name="Weinstock G.M."/>
            <person name="Rosenthal A."/>
            <person name="Cox E.C."/>
            <person name="Chisholm R.L."/>
            <person name="Gibbs R.A."/>
            <person name="Loomis W.F."/>
            <person name="Platzer M."/>
            <person name="Kay R.R."/>
            <person name="Williams J.G."/>
            <person name="Dear P.H."/>
            <person name="Noegel A.A."/>
            <person name="Barrell B.G."/>
            <person name="Kuspa A."/>
        </authorList>
    </citation>
    <scope>NUCLEOTIDE SEQUENCE [LARGE SCALE GENOMIC DNA]</scope>
    <source>
        <strain>AX4</strain>
    </source>
</reference>
<reference key="2">
    <citation type="journal article" date="1989" name="Nucleic Acids Res.">
        <title>Primary structure and regulation of vegetative specific genes of Dictyostelium discoideum.</title>
        <authorList>
            <person name="Singleton C.K."/>
            <person name="Manning S.S."/>
            <person name="Ken R."/>
        </authorList>
    </citation>
    <scope>NUCLEOTIDE SEQUENCE [GENOMIC DNA] OF 1-288</scope>
    <source>
        <strain>AX3</strain>
    </source>
</reference>
<comment type="catalytic activity">
    <reaction evidence="2">
        <text>tRNA(Gln) + L-glutamine + ATP = L-glutaminyl-tRNA(Gln) + AMP + diphosphate</text>
        <dbReference type="Rhea" id="RHEA:20121"/>
        <dbReference type="Rhea" id="RHEA-COMP:9662"/>
        <dbReference type="Rhea" id="RHEA-COMP:9681"/>
        <dbReference type="ChEBI" id="CHEBI:30616"/>
        <dbReference type="ChEBI" id="CHEBI:33019"/>
        <dbReference type="ChEBI" id="CHEBI:58359"/>
        <dbReference type="ChEBI" id="CHEBI:78442"/>
        <dbReference type="ChEBI" id="CHEBI:78521"/>
        <dbReference type="ChEBI" id="CHEBI:456215"/>
        <dbReference type="EC" id="6.1.1.18"/>
    </reaction>
</comment>
<comment type="developmental stage">
    <text>This protein is expressed in growing cells and deactivated upon the initiation of development.</text>
</comment>
<comment type="similarity">
    <text evidence="3">Belongs to the class-I aminoacyl-tRNA synthetase family.</text>
</comment>
<comment type="sequence caution" evidence="3">
    <conflict type="frameshift">
        <sequence resource="EMBL-CDS" id="CAA33446"/>
    </conflict>
</comment>
<keyword id="KW-0030">Aminoacyl-tRNA synthetase</keyword>
<keyword id="KW-0067">ATP-binding</keyword>
<keyword id="KW-0436">Ligase</keyword>
<keyword id="KW-0547">Nucleotide-binding</keyword>
<keyword id="KW-0648">Protein biosynthesis</keyword>
<keyword id="KW-1185">Reference proteome</keyword>